<gene>
    <name type="primary">cusA</name>
    <name type="synonym">ybdE</name>
    <name type="ordered locus">b0575</name>
    <name type="ordered locus">JW0564</name>
</gene>
<name>CUSA_ECOLI</name>
<reference key="1">
    <citation type="journal article" date="1996" name="DNA Res.">
        <title>A 718-kb DNA sequence of the Escherichia coli K-12 genome corresponding to the 12.7-28.0 min region on the linkage map.</title>
        <authorList>
            <person name="Oshima T."/>
            <person name="Aiba H."/>
            <person name="Baba T."/>
            <person name="Fujita K."/>
            <person name="Hayashi K."/>
            <person name="Honjo A."/>
            <person name="Ikemoto K."/>
            <person name="Inada T."/>
            <person name="Itoh T."/>
            <person name="Kajihara M."/>
            <person name="Kanai K."/>
            <person name="Kashimoto K."/>
            <person name="Kimura S."/>
            <person name="Kitagawa M."/>
            <person name="Makino K."/>
            <person name="Masuda S."/>
            <person name="Miki T."/>
            <person name="Mizobuchi K."/>
            <person name="Mori H."/>
            <person name="Motomura K."/>
            <person name="Nakamura Y."/>
            <person name="Nashimoto H."/>
            <person name="Nishio Y."/>
            <person name="Saito N."/>
            <person name="Sampei G."/>
            <person name="Seki Y."/>
            <person name="Tagami H."/>
            <person name="Takemoto K."/>
            <person name="Wada C."/>
            <person name="Yamamoto Y."/>
            <person name="Yano M."/>
            <person name="Horiuchi T."/>
        </authorList>
    </citation>
    <scope>NUCLEOTIDE SEQUENCE [LARGE SCALE GENOMIC DNA]</scope>
    <source>
        <strain>K12 / W3110 / ATCC 27325 / DSM 5911</strain>
    </source>
</reference>
<reference key="2">
    <citation type="submission" date="1997-01" db="EMBL/GenBank/DDBJ databases">
        <title>Sequence of minutes 4-25 of Escherichia coli.</title>
        <authorList>
            <person name="Chung E."/>
            <person name="Allen E."/>
            <person name="Araujo R."/>
            <person name="Aparicio A.M."/>
            <person name="Davis K."/>
            <person name="Duncan M."/>
            <person name="Federspiel N."/>
            <person name="Hyman R."/>
            <person name="Kalman S."/>
            <person name="Komp C."/>
            <person name="Kurdi O."/>
            <person name="Lew H."/>
            <person name="Lin D."/>
            <person name="Namath A."/>
            <person name="Oefner P."/>
            <person name="Roberts D."/>
            <person name="Schramm S."/>
            <person name="Davis R.W."/>
        </authorList>
    </citation>
    <scope>NUCLEOTIDE SEQUENCE [LARGE SCALE GENOMIC DNA]</scope>
    <source>
        <strain>K12 / MG1655 / ATCC 47076</strain>
    </source>
</reference>
<reference key="3">
    <citation type="journal article" date="1997" name="Science">
        <title>The complete genome sequence of Escherichia coli K-12.</title>
        <authorList>
            <person name="Blattner F.R."/>
            <person name="Plunkett G. III"/>
            <person name="Bloch C.A."/>
            <person name="Perna N.T."/>
            <person name="Burland V."/>
            <person name="Riley M."/>
            <person name="Collado-Vides J."/>
            <person name="Glasner J.D."/>
            <person name="Rode C.K."/>
            <person name="Mayhew G.F."/>
            <person name="Gregor J."/>
            <person name="Davis N.W."/>
            <person name="Kirkpatrick H.A."/>
            <person name="Goeden M.A."/>
            <person name="Rose D.J."/>
            <person name="Mau B."/>
            <person name="Shao Y."/>
        </authorList>
    </citation>
    <scope>NUCLEOTIDE SEQUENCE [LARGE SCALE GENOMIC DNA]</scope>
    <source>
        <strain>K12 / MG1655 / ATCC 47076</strain>
    </source>
</reference>
<reference key="4">
    <citation type="journal article" date="2006" name="Mol. Syst. Biol.">
        <title>Highly accurate genome sequences of Escherichia coli K-12 strains MG1655 and W3110.</title>
        <authorList>
            <person name="Hayashi K."/>
            <person name="Morooka N."/>
            <person name="Yamamoto Y."/>
            <person name="Fujita K."/>
            <person name="Isono K."/>
            <person name="Choi S."/>
            <person name="Ohtsubo E."/>
            <person name="Baba T."/>
            <person name="Wanner B.L."/>
            <person name="Mori H."/>
            <person name="Horiuchi T."/>
        </authorList>
    </citation>
    <scope>NUCLEOTIDE SEQUENCE [LARGE SCALE GENOMIC DNA]</scope>
    <source>
        <strain>K12 / W3110 / ATCC 27325 / DSM 5911</strain>
    </source>
</reference>
<reference key="5">
    <citation type="journal article" date="1991" name="J. Bacteriol.">
        <title>Cloning and sequencing of the pheP gene, which encodes the phenylalanine-specific transport system of Escherichia coli.</title>
        <authorList>
            <person name="Pi J."/>
            <person name="Wookey P.J."/>
            <person name="Pittard A.J."/>
        </authorList>
    </citation>
    <scope>NUCLEOTIDE SEQUENCE [GENOMIC DNA] OF 871-1047</scope>
    <source>
        <strain>K12</strain>
    </source>
</reference>
<reference key="6">
    <citation type="journal article" date="1994" name="Nucleic Acids Res.">
        <title>Intrinsic and extrinsic approaches for detecting genes in a bacterial genome.</title>
        <authorList>
            <person name="Borodovsky M."/>
            <person name="Rudd K.E."/>
            <person name="Koonin E.V."/>
        </authorList>
    </citation>
    <scope>IDENTIFICATION</scope>
</reference>
<reference key="7">
    <citation type="journal article" date="2000" name="J. Bacteriol.">
        <title>Identification of a copper-responsive two-component system on the chromosome of Escherichia coli K-12.</title>
        <authorList>
            <person name="Munson G.P."/>
            <person name="Lam D.L."/>
            <person name="Outten F.W."/>
            <person name="O'Halloran T.V."/>
        </authorList>
    </citation>
    <scope>GENE NAME</scope>
    <source>
        <strain>K12 / DH5-alpha</strain>
    </source>
</reference>
<reference key="8">
    <citation type="journal article" date="2001" name="J. Biol. Chem.">
        <title>The independent cue and cus systems confer copper tolerance during aerobic and anaerobic growth in Escherichia coli.</title>
        <authorList>
            <person name="Outten F.W."/>
            <person name="Huffman D.L."/>
            <person name="Hale J.A."/>
            <person name="O'Halloran T.V."/>
        </authorList>
    </citation>
    <scope>FUNCTION IN COPPER HOMEOSTASIS</scope>
    <source>
        <strain>K12</strain>
    </source>
</reference>
<reference key="9">
    <citation type="journal article" date="2001" name="Microbiology">
        <title>The product of the ybdE gene of the Escherichia coli chromosome is involved in detoxification of silver ions.</title>
        <authorList>
            <person name="Franke S."/>
            <person name="Grass G."/>
            <person name="Nies D.H."/>
        </authorList>
    </citation>
    <scope>INDUCTION</scope>
    <source>
        <strain>K38</strain>
    </source>
</reference>
<reference key="10">
    <citation type="journal article" date="2003" name="J. Bacteriol.">
        <title>Molecular analysis of the copper-transporting efflux system CusCFBA of Escherichia coli.</title>
        <authorList>
            <person name="Franke S."/>
            <person name="Grass G."/>
            <person name="Rensing C."/>
            <person name="Nies D.H."/>
        </authorList>
    </citation>
    <scope>FUNCTION</scope>
    <scope>MUTAGENESIS OF ALA-399; ASP-405; GLU-412; MET-573; MET-623; MET-640; MET-672; MET-738; MET-755; MET-792; MET-812 AND MET-833</scope>
    <source>
        <strain>K12 / W3110 / ATCC 27325 / DSM 5911</strain>
    </source>
</reference>
<evidence type="ECO:0000255" key="1"/>
<evidence type="ECO:0000269" key="2">
    <source>
    </source>
</evidence>
<evidence type="ECO:0000269" key="3">
    <source>
    </source>
</evidence>
<evidence type="ECO:0000269" key="4">
    <source>
    </source>
</evidence>
<evidence type="ECO:0000305" key="5"/>
<evidence type="ECO:0007829" key="6">
    <source>
        <dbReference type="PDB" id="3NE5"/>
    </source>
</evidence>
<evidence type="ECO:0007829" key="7">
    <source>
        <dbReference type="PDB" id="3T53"/>
    </source>
</evidence>
<evidence type="ECO:0007829" key="8">
    <source>
        <dbReference type="PDB" id="3T56"/>
    </source>
</evidence>
<evidence type="ECO:0007829" key="9">
    <source>
        <dbReference type="PDB" id="4DNT"/>
    </source>
</evidence>
<evidence type="ECO:0007829" key="10">
    <source>
        <dbReference type="PDB" id="7KF6"/>
    </source>
</evidence>
<evidence type="ECO:0007829" key="11">
    <source>
        <dbReference type="PDB" id="7KF7"/>
    </source>
</evidence>
<dbReference type="EMBL" id="U82598">
    <property type="protein sequence ID" value="AAB40773.1"/>
    <property type="molecule type" value="Genomic_DNA"/>
</dbReference>
<dbReference type="EMBL" id="U00096">
    <property type="protein sequence ID" value="AAC73676.1"/>
    <property type="molecule type" value="Genomic_DNA"/>
</dbReference>
<dbReference type="EMBL" id="AP009048">
    <property type="protein sequence ID" value="BAA35215.1"/>
    <property type="molecule type" value="Genomic_DNA"/>
</dbReference>
<dbReference type="EMBL" id="M58000">
    <property type="status" value="NOT_ANNOTATED_CDS"/>
    <property type="molecule type" value="Genomic_DNA"/>
</dbReference>
<dbReference type="PIR" id="E64790">
    <property type="entry name" value="E64790"/>
</dbReference>
<dbReference type="RefSeq" id="NP_415107.1">
    <property type="nucleotide sequence ID" value="NC_000913.3"/>
</dbReference>
<dbReference type="RefSeq" id="WP_000573945.1">
    <property type="nucleotide sequence ID" value="NZ_SSZK01000024.1"/>
</dbReference>
<dbReference type="PDB" id="3K07">
    <property type="method" value="X-ray"/>
    <property type="resolution" value="3.52 A"/>
    <property type="chains" value="A=1-1047"/>
</dbReference>
<dbReference type="PDB" id="3K0I">
    <property type="method" value="X-ray"/>
    <property type="resolution" value="4.12 A"/>
    <property type="chains" value="A=1-1047"/>
</dbReference>
<dbReference type="PDB" id="3KSO">
    <property type="method" value="X-ray"/>
    <property type="resolution" value="4.37 A"/>
    <property type="chains" value="A=1-1047"/>
</dbReference>
<dbReference type="PDB" id="3KSS">
    <property type="method" value="X-ray"/>
    <property type="resolution" value="3.88 A"/>
    <property type="chains" value="A=1-1047"/>
</dbReference>
<dbReference type="PDB" id="3NE5">
    <property type="method" value="X-ray"/>
    <property type="resolution" value="2.90 A"/>
    <property type="chains" value="A=2-1047"/>
</dbReference>
<dbReference type="PDB" id="3T51">
    <property type="method" value="X-ray"/>
    <property type="resolution" value="3.90 A"/>
    <property type="chains" value="A=1-1047"/>
</dbReference>
<dbReference type="PDB" id="3T53">
    <property type="method" value="X-ray"/>
    <property type="resolution" value="3.37 A"/>
    <property type="chains" value="A=1-1047"/>
</dbReference>
<dbReference type="PDB" id="3T56">
    <property type="method" value="X-ray"/>
    <property type="resolution" value="3.42 A"/>
    <property type="chains" value="A=1-1047"/>
</dbReference>
<dbReference type="PDB" id="4DNR">
    <property type="method" value="X-ray"/>
    <property type="resolution" value="3.68 A"/>
    <property type="chains" value="A=1-1047"/>
</dbReference>
<dbReference type="PDB" id="4DNT">
    <property type="method" value="X-ray"/>
    <property type="resolution" value="3.10 A"/>
    <property type="chains" value="A=1-1047"/>
</dbReference>
<dbReference type="PDB" id="4DOP">
    <property type="method" value="X-ray"/>
    <property type="resolution" value="4.20 A"/>
    <property type="chains" value="A=1-1047"/>
</dbReference>
<dbReference type="PDB" id="7KF5">
    <property type="method" value="EM"/>
    <property type="resolution" value="3.20 A"/>
    <property type="chains" value="A/B/C=1-1047"/>
</dbReference>
<dbReference type="PDB" id="7KF6">
    <property type="method" value="EM"/>
    <property type="resolution" value="3.40 A"/>
    <property type="chains" value="A/B/C=1-1047"/>
</dbReference>
<dbReference type="PDB" id="7KF7">
    <property type="method" value="EM"/>
    <property type="resolution" value="2.80 A"/>
    <property type="chains" value="A/B/C=1-1047"/>
</dbReference>
<dbReference type="PDB" id="7KF8">
    <property type="method" value="EM"/>
    <property type="resolution" value="3.00 A"/>
    <property type="chains" value="A/B/C=1-1047"/>
</dbReference>
<dbReference type="PDBsum" id="3K07"/>
<dbReference type="PDBsum" id="3K0I"/>
<dbReference type="PDBsum" id="3KSO"/>
<dbReference type="PDBsum" id="3KSS"/>
<dbReference type="PDBsum" id="3NE5"/>
<dbReference type="PDBsum" id="3T51"/>
<dbReference type="PDBsum" id="3T53"/>
<dbReference type="PDBsum" id="3T56"/>
<dbReference type="PDBsum" id="4DNR"/>
<dbReference type="PDBsum" id="4DNT"/>
<dbReference type="PDBsum" id="4DOP"/>
<dbReference type="PDBsum" id="7KF5"/>
<dbReference type="PDBsum" id="7KF6"/>
<dbReference type="PDBsum" id="7KF7"/>
<dbReference type="PDBsum" id="7KF8"/>
<dbReference type="EMDB" id="EMD-22843"/>
<dbReference type="EMDB" id="EMD-22844"/>
<dbReference type="EMDB" id="EMD-22845"/>
<dbReference type="EMDB" id="EMD-22846"/>
<dbReference type="SMR" id="P38054"/>
<dbReference type="BioGRID" id="4260908">
    <property type="interactions" value="280"/>
</dbReference>
<dbReference type="ComplexPortal" id="CPX-2254">
    <property type="entry name" value="Cus cation efflux complex"/>
</dbReference>
<dbReference type="DIP" id="DIP-9345N"/>
<dbReference type="FunCoup" id="P38054">
    <property type="interactions" value="508"/>
</dbReference>
<dbReference type="IntAct" id="P38054">
    <property type="interactions" value="5"/>
</dbReference>
<dbReference type="STRING" id="511145.b0575"/>
<dbReference type="TCDB" id="2.A.6.1.4">
    <property type="family name" value="the resistance-nodulation-cell division (rnd) superfamily"/>
</dbReference>
<dbReference type="PaxDb" id="511145-b0575"/>
<dbReference type="EnsemblBacteria" id="AAC73676">
    <property type="protein sequence ID" value="AAC73676"/>
    <property type="gene ID" value="b0575"/>
</dbReference>
<dbReference type="GeneID" id="945191"/>
<dbReference type="KEGG" id="ecj:JW0564"/>
<dbReference type="KEGG" id="eco:b0575"/>
<dbReference type="KEGG" id="ecoc:C3026_02855"/>
<dbReference type="PATRIC" id="fig|1411691.4.peg.1699"/>
<dbReference type="EchoBASE" id="EB2270"/>
<dbReference type="eggNOG" id="COG3696">
    <property type="taxonomic scope" value="Bacteria"/>
</dbReference>
<dbReference type="HOGENOM" id="CLU_002755_1_2_6"/>
<dbReference type="InParanoid" id="P38054"/>
<dbReference type="OMA" id="NSWTYPI"/>
<dbReference type="OrthoDB" id="9758757at2"/>
<dbReference type="PhylomeDB" id="P38054"/>
<dbReference type="BioCyc" id="EcoCyc:YBDE-MONOMER"/>
<dbReference type="BioCyc" id="MetaCyc:YBDE-MONOMER"/>
<dbReference type="EvolutionaryTrace" id="P38054"/>
<dbReference type="PRO" id="PR:P38054"/>
<dbReference type="Proteomes" id="UP000000625">
    <property type="component" value="Chromosome"/>
</dbReference>
<dbReference type="GO" id="GO:0016020">
    <property type="term" value="C:membrane"/>
    <property type="evidence" value="ECO:0000314"/>
    <property type="project" value="EcoCyc"/>
</dbReference>
<dbReference type="GO" id="GO:0005886">
    <property type="term" value="C:plasma membrane"/>
    <property type="evidence" value="ECO:0000314"/>
    <property type="project" value="EcoCyc"/>
</dbReference>
<dbReference type="GO" id="GO:0005507">
    <property type="term" value="F:copper ion binding"/>
    <property type="evidence" value="ECO:0000316"/>
    <property type="project" value="EcoCyc"/>
</dbReference>
<dbReference type="GO" id="GO:0005375">
    <property type="term" value="F:copper ion transmembrane transporter activity"/>
    <property type="evidence" value="ECO:0000316"/>
    <property type="project" value="EcoCyc"/>
</dbReference>
<dbReference type="GO" id="GO:0015080">
    <property type="term" value="F:silver ion transmembrane transporter activity"/>
    <property type="evidence" value="ECO:0000315"/>
    <property type="project" value="EcoCyc"/>
</dbReference>
<dbReference type="GO" id="GO:0042910">
    <property type="term" value="F:xenobiotic transmembrane transporter activity"/>
    <property type="evidence" value="ECO:0000318"/>
    <property type="project" value="GO_Central"/>
</dbReference>
<dbReference type="GO" id="GO:0060003">
    <property type="term" value="P:copper ion export"/>
    <property type="evidence" value="ECO:0000316"/>
    <property type="project" value="EcoCyc"/>
</dbReference>
<dbReference type="GO" id="GO:0035434">
    <property type="term" value="P:copper ion transmembrane transport"/>
    <property type="evidence" value="ECO:0000303"/>
    <property type="project" value="ComplexPortal"/>
</dbReference>
<dbReference type="GO" id="GO:0010273">
    <property type="term" value="P:detoxification of copper ion"/>
    <property type="evidence" value="ECO:0000316"/>
    <property type="project" value="EcoCyc"/>
</dbReference>
<dbReference type="GO" id="GO:0006878">
    <property type="term" value="P:intracellular copper ion homeostasis"/>
    <property type="evidence" value="ECO:0000316"/>
    <property type="project" value="EcoCyc"/>
</dbReference>
<dbReference type="GO" id="GO:0015679">
    <property type="term" value="P:plasma membrane copper ion transport"/>
    <property type="evidence" value="ECO:0000316"/>
    <property type="project" value="EcoCyc"/>
</dbReference>
<dbReference type="GO" id="GO:0046688">
    <property type="term" value="P:response to copper ion"/>
    <property type="evidence" value="ECO:0000315"/>
    <property type="project" value="EcoliWiki"/>
</dbReference>
<dbReference type="GO" id="GO:0010272">
    <property type="term" value="P:response to silver ion"/>
    <property type="evidence" value="ECO:0000315"/>
    <property type="project" value="EcoCyc"/>
</dbReference>
<dbReference type="GO" id="GO:0009636">
    <property type="term" value="P:response to toxic substance"/>
    <property type="evidence" value="ECO:0000303"/>
    <property type="project" value="ComplexPortal"/>
</dbReference>
<dbReference type="GO" id="GO:1902601">
    <property type="term" value="P:silver ion transmembrane transport"/>
    <property type="evidence" value="ECO:0000303"/>
    <property type="project" value="ComplexPortal"/>
</dbReference>
<dbReference type="GO" id="GO:0015673">
    <property type="term" value="P:silver ion transport"/>
    <property type="evidence" value="ECO:0000315"/>
    <property type="project" value="EcoCyc"/>
</dbReference>
<dbReference type="FunFam" id="3.30.70.1430:FF:000006">
    <property type="entry name" value="Putative cation efflux system protein CusA"/>
    <property type="match status" value="1"/>
</dbReference>
<dbReference type="Gene3D" id="3.30.70.1430">
    <property type="entry name" value="Multidrug efflux transporter AcrB pore domain"/>
    <property type="match status" value="2"/>
</dbReference>
<dbReference type="Gene3D" id="3.30.70.1440">
    <property type="entry name" value="Multidrug efflux transporter AcrB pore domain"/>
    <property type="match status" value="1"/>
</dbReference>
<dbReference type="Gene3D" id="3.30.70.1320">
    <property type="entry name" value="Multidrug efflux transporter AcrB pore domain like"/>
    <property type="match status" value="1"/>
</dbReference>
<dbReference type="Gene3D" id="3.30.2090.10">
    <property type="entry name" value="Multidrug efflux transporter AcrB TolC docking domain, DN and DC subdomains"/>
    <property type="match status" value="2"/>
</dbReference>
<dbReference type="Gene3D" id="1.20.1640.10">
    <property type="entry name" value="Multidrug efflux transporter AcrB transmembrane domain"/>
    <property type="match status" value="2"/>
</dbReference>
<dbReference type="InterPro" id="IPR027463">
    <property type="entry name" value="AcrB_DN_DC_subdom"/>
</dbReference>
<dbReference type="InterPro" id="IPR001036">
    <property type="entry name" value="Acrflvin-R"/>
</dbReference>
<dbReference type="InterPro" id="IPR004763">
    <property type="entry name" value="CusA-like"/>
</dbReference>
<dbReference type="NCBIfam" id="TIGR00914">
    <property type="entry name" value="2A0601"/>
    <property type="match status" value="1"/>
</dbReference>
<dbReference type="PANTHER" id="PTHR32063">
    <property type="match status" value="1"/>
</dbReference>
<dbReference type="PANTHER" id="PTHR32063:SF19">
    <property type="entry name" value="CATION EFFLUX SYSTEM PROTEIN CUSA"/>
    <property type="match status" value="1"/>
</dbReference>
<dbReference type="Pfam" id="PF00873">
    <property type="entry name" value="ACR_tran"/>
    <property type="match status" value="1"/>
</dbReference>
<dbReference type="PRINTS" id="PR00702">
    <property type="entry name" value="ACRIFLAVINRP"/>
</dbReference>
<dbReference type="SUPFAM" id="SSF82693">
    <property type="entry name" value="Multidrug efflux transporter AcrB pore domain, PN1, PN2, PC1 and PC2 subdomains"/>
    <property type="match status" value="2"/>
</dbReference>
<dbReference type="SUPFAM" id="SSF82714">
    <property type="entry name" value="Multidrug efflux transporter AcrB TolC docking domain, DN and DC subdomains"/>
    <property type="match status" value="2"/>
</dbReference>
<dbReference type="SUPFAM" id="SSF82866">
    <property type="entry name" value="Multidrug efflux transporter AcrB transmembrane domain"/>
    <property type="match status" value="2"/>
</dbReference>
<comment type="function">
    <text evidence="3 4">Part of a cation efflux system that mediates resistance to copper and silver.</text>
</comment>
<comment type="subunit">
    <text>The cus efflux system is composed of CusA, CusB, CusC and CusF.</text>
</comment>
<comment type="interaction">
    <interactant intactId="EBI-1126317">
        <id>P38054</id>
    </interactant>
    <interactant intactId="EBI-1118842">
        <id>P77239</id>
        <label>cusB</label>
    </interactant>
    <organismsDiffer>false</organismsDiffer>
    <experiments>2</experiments>
</comment>
<comment type="subcellular location">
    <subcellularLocation>
        <location evidence="5">Cell inner membrane</location>
        <topology evidence="5">Multi-pass membrane protein</topology>
    </subcellularLocation>
</comment>
<comment type="induction">
    <text evidence="2">Transcriptionally regulated by CusR in response to copper and silver ions.</text>
</comment>
<comment type="miscellaneous">
    <text>The cus system plays an important role in copper tolerance under anaerobic growth and, under extreme copper stress, in aerobic growth.</text>
</comment>
<comment type="similarity">
    <text evidence="5">Belongs to the resistance-nodulation-cell division (RND) (TC 2.A.6) family.</text>
</comment>
<comment type="sequence caution" evidence="5">
    <conflict type="frameshift">
        <sequence resource="EMBL" id="M58000"/>
    </conflict>
</comment>
<organism>
    <name type="scientific">Escherichia coli (strain K12)</name>
    <dbReference type="NCBI Taxonomy" id="83333"/>
    <lineage>
        <taxon>Bacteria</taxon>
        <taxon>Pseudomonadati</taxon>
        <taxon>Pseudomonadota</taxon>
        <taxon>Gammaproteobacteria</taxon>
        <taxon>Enterobacterales</taxon>
        <taxon>Enterobacteriaceae</taxon>
        <taxon>Escherichia</taxon>
    </lineage>
</organism>
<feature type="chain" id="PRO_0000161815" description="Cation efflux system protein CusA">
    <location>
        <begin position="1"/>
        <end position="1047"/>
    </location>
</feature>
<feature type="transmembrane region" description="Helical" evidence="1">
    <location>
        <begin position="14"/>
        <end position="34"/>
    </location>
</feature>
<feature type="transmembrane region" description="Helical" evidence="1">
    <location>
        <begin position="338"/>
        <end position="358"/>
    </location>
</feature>
<feature type="transmembrane region" description="Helical" evidence="1">
    <location>
        <begin position="363"/>
        <end position="383"/>
    </location>
</feature>
<feature type="transmembrane region" description="Helical" evidence="1">
    <location>
        <begin position="391"/>
        <end position="411"/>
    </location>
</feature>
<feature type="transmembrane region" description="Helical" evidence="1">
    <location>
        <begin position="446"/>
        <end position="466"/>
    </location>
</feature>
<feature type="transmembrane region" description="Helical" evidence="1">
    <location>
        <begin position="485"/>
        <end position="505"/>
    </location>
</feature>
<feature type="transmembrane region" description="Helical" evidence="1">
    <location>
        <begin position="532"/>
        <end position="552"/>
    </location>
</feature>
<feature type="transmembrane region" description="Helical" evidence="1">
    <location>
        <begin position="871"/>
        <end position="891"/>
    </location>
</feature>
<feature type="transmembrane region" description="Helical" evidence="1">
    <location>
        <begin position="898"/>
        <end position="918"/>
    </location>
</feature>
<feature type="transmembrane region" description="Helical" evidence="1">
    <location>
        <begin position="928"/>
        <end position="948"/>
    </location>
</feature>
<feature type="transmembrane region" description="Helical" evidence="1">
    <location>
        <begin position="985"/>
        <end position="1005"/>
    </location>
</feature>
<feature type="transmembrane region" description="Helical" evidence="1">
    <location>
        <begin position="1012"/>
        <end position="1032"/>
    </location>
</feature>
<feature type="mutagenesis site" description="Strong decrease in copper resistance." evidence="4">
    <original>A</original>
    <variation>D</variation>
    <location>
        <position position="399"/>
    </location>
</feature>
<feature type="mutagenesis site" description="Loss of copper resistance." evidence="4">
    <original>D</original>
    <variation>N</variation>
    <location>
        <position position="405"/>
    </location>
</feature>
<feature type="mutagenesis site" description="Slight decrease in copper resistance." evidence="4">
    <original>E</original>
    <variation>D</variation>
    <location>
        <position position="412"/>
    </location>
</feature>
<feature type="mutagenesis site" description="Loss of copper resistance." evidence="4">
    <original>E</original>
    <variation>Q</variation>
    <location>
        <position position="412"/>
    </location>
</feature>
<feature type="mutagenesis site" description="Loss of copper resistance." evidence="4">
    <original>M</original>
    <variation>I</variation>
    <location>
        <position position="573"/>
    </location>
</feature>
<feature type="mutagenesis site" description="Loss of copper resistance." evidence="4">
    <original>M</original>
    <variation>I</variation>
    <location>
        <position position="623"/>
    </location>
</feature>
<feature type="mutagenesis site" description="No change in copper resistance." evidence="4">
    <original>M</original>
    <variation>I</variation>
    <location>
        <position position="640"/>
    </location>
</feature>
<feature type="mutagenesis site" description="Loss of copper resistance." evidence="4">
    <original>M</original>
    <variation>I</variation>
    <location>
        <position position="672"/>
    </location>
</feature>
<feature type="mutagenesis site" description="No change in copper resistance." evidence="4">
    <original>M</original>
    <variation>I</variation>
    <location>
        <position position="738"/>
    </location>
</feature>
<feature type="mutagenesis site" description="Slight decrease in copper resistance." evidence="4">
    <original>M</original>
    <variation>I</variation>
    <location>
        <position position="755"/>
    </location>
</feature>
<feature type="mutagenesis site" description="No change in copper resistance." evidence="4">
    <original>M</original>
    <variation>I</variation>
    <location>
        <position position="792"/>
    </location>
</feature>
<feature type="mutagenesis site" description="Slight decrease in copper resistance." evidence="4">
    <original>M</original>
    <variation>I</variation>
    <location>
        <position position="812"/>
    </location>
</feature>
<feature type="mutagenesis site" description="Slight decrease in copper resistance." evidence="4">
    <original>M</original>
    <variation>I</variation>
    <location>
        <position position="833"/>
    </location>
</feature>
<feature type="sequence conflict" description="In Ref. 5; M58000." evidence="5" ref="5">
    <original>AL</original>
    <variation>SV</variation>
    <location>
        <begin position="897"/>
        <end position="898"/>
    </location>
</feature>
<feature type="helix" evidence="11">
    <location>
        <begin position="7"/>
        <end position="11"/>
    </location>
</feature>
<feature type="helix" evidence="11">
    <location>
        <begin position="13"/>
        <end position="32"/>
    </location>
</feature>
<feature type="strand" evidence="11">
    <location>
        <begin position="46"/>
        <end position="52"/>
    </location>
</feature>
<feature type="helix" evidence="11">
    <location>
        <begin position="58"/>
        <end position="64"/>
    </location>
</feature>
<feature type="helix" evidence="11">
    <location>
        <begin position="66"/>
        <end position="73"/>
    </location>
</feature>
<feature type="strand" evidence="11">
    <location>
        <begin position="79"/>
        <end position="86"/>
    </location>
</feature>
<feature type="strand" evidence="11">
    <location>
        <begin position="88"/>
        <end position="97"/>
    </location>
</feature>
<feature type="helix" evidence="11">
    <location>
        <begin position="103"/>
        <end position="118"/>
    </location>
</feature>
<feature type="strand" evidence="11">
    <location>
        <begin position="127"/>
        <end position="129"/>
    </location>
</feature>
<feature type="helix" evidence="11">
    <location>
        <begin position="135"/>
        <end position="137"/>
    </location>
</feature>
<feature type="strand" evidence="11">
    <location>
        <begin position="138"/>
        <end position="146"/>
    </location>
</feature>
<feature type="strand" evidence="7">
    <location>
        <begin position="149"/>
        <end position="151"/>
    </location>
</feature>
<feature type="helix" evidence="11">
    <location>
        <begin position="153"/>
        <end position="167"/>
    </location>
</feature>
<feature type="strand" evidence="11">
    <location>
        <begin position="174"/>
        <end position="182"/>
    </location>
</feature>
<feature type="strand" evidence="11">
    <location>
        <begin position="185"/>
        <end position="191"/>
    </location>
</feature>
<feature type="helix" evidence="11">
    <location>
        <begin position="193"/>
        <end position="199"/>
    </location>
</feature>
<feature type="helix" evidence="11">
    <location>
        <begin position="203"/>
        <end position="210"/>
    </location>
</feature>
<feature type="strand" evidence="11">
    <location>
        <begin position="221"/>
        <end position="223"/>
    </location>
</feature>
<feature type="strand" evidence="11">
    <location>
        <begin position="225"/>
        <end position="230"/>
    </location>
</feature>
<feature type="turn" evidence="11">
    <location>
        <begin position="241"/>
        <end position="245"/>
    </location>
</feature>
<feature type="strand" evidence="11">
    <location>
        <begin position="247"/>
        <end position="249"/>
    </location>
</feature>
<feature type="strand" evidence="6">
    <location>
        <begin position="256"/>
        <end position="258"/>
    </location>
</feature>
<feature type="helix" evidence="11">
    <location>
        <begin position="259"/>
        <end position="261"/>
    </location>
</feature>
<feature type="strand" evidence="11">
    <location>
        <begin position="263"/>
        <end position="269"/>
    </location>
</feature>
<feature type="strand" evidence="11">
    <location>
        <begin position="273"/>
        <end position="277"/>
    </location>
</feature>
<feature type="strand" evidence="11">
    <location>
        <begin position="279"/>
        <end position="281"/>
    </location>
</feature>
<feature type="strand" evidence="11">
    <location>
        <begin position="285"/>
        <end position="291"/>
    </location>
</feature>
<feature type="strand" evidence="8">
    <location>
        <begin position="293"/>
        <end position="295"/>
    </location>
</feature>
<feature type="helix" evidence="11">
    <location>
        <begin position="297"/>
        <end position="310"/>
    </location>
</feature>
<feature type="turn" evidence="11">
    <location>
        <begin position="311"/>
        <end position="314"/>
    </location>
</feature>
<feature type="strand" evidence="11">
    <location>
        <begin position="319"/>
        <end position="327"/>
    </location>
</feature>
<feature type="helix" evidence="11">
    <location>
        <begin position="328"/>
        <end position="357"/>
    </location>
</feature>
<feature type="helix" evidence="11">
    <location>
        <begin position="360"/>
        <end position="367"/>
    </location>
</feature>
<feature type="helix" evidence="11">
    <location>
        <begin position="369"/>
        <end position="384"/>
    </location>
</feature>
<feature type="helix" evidence="11">
    <location>
        <begin position="390"/>
        <end position="424"/>
    </location>
</feature>
<feature type="helix" evidence="11">
    <location>
        <begin position="432"/>
        <end position="461"/>
    </location>
</feature>
<feature type="helix" evidence="11">
    <location>
        <begin position="462"/>
        <end position="466"/>
    </location>
</feature>
<feature type="helix" evidence="11">
    <location>
        <begin position="470"/>
        <end position="495"/>
    </location>
</feature>
<feature type="helix" evidence="11">
    <location>
        <begin position="497"/>
        <end position="503"/>
    </location>
</feature>
<feature type="helix" evidence="11">
    <location>
        <begin position="518"/>
        <end position="534"/>
    </location>
</feature>
<feature type="helix" evidence="11">
    <location>
        <begin position="536"/>
        <end position="548"/>
    </location>
</feature>
<feature type="helix" evidence="11">
    <location>
        <begin position="551"/>
        <end position="556"/>
    </location>
</feature>
<feature type="strand" evidence="7">
    <location>
        <begin position="557"/>
        <end position="559"/>
    </location>
</feature>
<feature type="strand" evidence="11">
    <location>
        <begin position="568"/>
        <end position="572"/>
    </location>
</feature>
<feature type="helix" evidence="11">
    <location>
        <begin position="582"/>
        <end position="596"/>
    </location>
</feature>
<feature type="strand" evidence="11">
    <location>
        <begin position="603"/>
        <end position="610"/>
    </location>
</feature>
<feature type="strand" evidence="10">
    <location>
        <begin position="613"/>
        <end position="616"/>
    </location>
</feature>
<feature type="strand" evidence="11">
    <location>
        <begin position="626"/>
        <end position="629"/>
    </location>
</feature>
<feature type="turn" evidence="6">
    <location>
        <begin position="633"/>
        <end position="635"/>
    </location>
</feature>
<feature type="helix" evidence="11">
    <location>
        <begin position="642"/>
        <end position="652"/>
    </location>
</feature>
<feature type="strand" evidence="7">
    <location>
        <begin position="658"/>
        <end position="663"/>
    </location>
</feature>
<feature type="helix" evidence="11">
    <location>
        <begin position="665"/>
        <end position="674"/>
    </location>
</feature>
<feature type="strand" evidence="11">
    <location>
        <begin position="678"/>
        <end position="688"/>
    </location>
</feature>
<feature type="helix" evidence="11">
    <location>
        <begin position="690"/>
        <end position="704"/>
    </location>
</feature>
<feature type="strand" evidence="10">
    <location>
        <begin position="707"/>
        <end position="709"/>
    </location>
</feature>
<feature type="strand" evidence="11">
    <location>
        <begin position="712"/>
        <end position="715"/>
    </location>
</feature>
<feature type="strand" evidence="11">
    <location>
        <begin position="721"/>
        <end position="728"/>
    </location>
</feature>
<feature type="helix" evidence="11">
    <location>
        <begin position="730"/>
        <end position="735"/>
    </location>
</feature>
<feature type="helix" evidence="11">
    <location>
        <begin position="740"/>
        <end position="748"/>
    </location>
</feature>
<feature type="turn" evidence="11">
    <location>
        <begin position="749"/>
        <end position="752"/>
    </location>
</feature>
<feature type="strand" evidence="11">
    <location>
        <begin position="758"/>
        <end position="761"/>
    </location>
</feature>
<feature type="strand" evidence="11">
    <location>
        <begin position="764"/>
        <end position="771"/>
    </location>
</feature>
<feature type="helix" evidence="11">
    <location>
        <begin position="774"/>
        <end position="776"/>
    </location>
</feature>
<feature type="strand" evidence="11">
    <location>
        <begin position="777"/>
        <end position="779"/>
    </location>
</feature>
<feature type="helix" evidence="11">
    <location>
        <begin position="780"/>
        <end position="783"/>
    </location>
</feature>
<feature type="strand" evidence="6">
    <location>
        <begin position="787"/>
        <end position="789"/>
    </location>
</feature>
<feature type="strand" evidence="6">
    <location>
        <begin position="795"/>
        <end position="797"/>
    </location>
</feature>
<feature type="turn" evidence="11">
    <location>
        <begin position="799"/>
        <end position="801"/>
    </location>
</feature>
<feature type="strand" evidence="11">
    <location>
        <begin position="802"/>
        <end position="809"/>
    </location>
</feature>
<feature type="strand" evidence="11">
    <location>
        <begin position="813"/>
        <end position="827"/>
    </location>
</feature>
<feature type="strand" evidence="11">
    <location>
        <begin position="829"/>
        <end position="831"/>
    </location>
</feature>
<feature type="helix" evidence="11">
    <location>
        <begin position="833"/>
        <end position="846"/>
    </location>
</feature>
<feature type="strand" evidence="11">
    <location>
        <begin position="854"/>
        <end position="860"/>
    </location>
</feature>
<feature type="helix" evidence="11">
    <location>
        <begin position="861"/>
        <end position="891"/>
    </location>
</feature>
<feature type="helix" evidence="11">
    <location>
        <begin position="894"/>
        <end position="901"/>
    </location>
</feature>
<feature type="helix" evidence="11">
    <location>
        <begin position="904"/>
        <end position="918"/>
    </location>
</feature>
<feature type="strand" evidence="9">
    <location>
        <begin position="921"/>
        <end position="923"/>
    </location>
</feature>
<feature type="helix" evidence="11">
    <location>
        <begin position="924"/>
        <end position="954"/>
    </location>
</feature>
<feature type="turn" evidence="11">
    <location>
        <begin position="957"/>
        <end position="961"/>
    </location>
</feature>
<feature type="strand" evidence="11">
    <location>
        <begin position="962"/>
        <end position="964"/>
    </location>
</feature>
<feature type="helix" evidence="11">
    <location>
        <begin position="967"/>
        <end position="977"/>
    </location>
</feature>
<feature type="turn" evidence="11">
    <location>
        <begin position="978"/>
        <end position="980"/>
    </location>
</feature>
<feature type="helix" evidence="11">
    <location>
        <begin position="982"/>
        <end position="993"/>
    </location>
</feature>
<feature type="helix" evidence="11">
    <location>
        <begin position="996"/>
        <end position="1000"/>
    </location>
</feature>
<feature type="strand" evidence="11">
    <location>
        <begin position="1003"/>
        <end position="1005"/>
    </location>
</feature>
<feature type="helix" evidence="11">
    <location>
        <begin position="1006"/>
        <end position="1039"/>
    </location>
</feature>
<proteinExistence type="evidence at protein level"/>
<accession>P38054</accession>
<accession>P77767</accession>
<sequence length="1047" mass="114707">MIEWIIRRSVANRFLVLMGALFLSIWGTWTIINTPVDALPDLSDVQVIIKTSYPGQAPQIVENQVTYPLTTTMLSVPGAKTVRGFSQFGDSYVYVIFEDGTDPYWARSRVLEYLNQVQGKLPAGVSAELGPDATGVGWIYEYALVDRSGKHDLADLRSLQDWFLKYELKTIPDVAEVASVGGVVKEYQVVIDPQRLAQYGISLAEVKSALDASNQEAGGSSIELAEAEYMVRASGYLQTLDDFNHIVLKASENGVPVYLRDVAKVQIGPEMRRGIAELNGEGEVAGGVVILRSGKNAREVIAAVKDKLETLKSSLPEGVEIVTTYDRSQLIDRAIDNLSGKLLEEFIVVAVVCALFLWHVRSALVAIISLPLGLCIAFIVMHFQGLNANIMSLGGIAIAVGAMVDAAIVMIENAHKRLEEWQHQHPDATLDNKTRWQVITDASVEVGPALFISLLIITLSFIPIFTLEGQEGRLFGPLAFTKTYAMAGAALLAIVVIPILMGYWIRGKIPPESSNPLNRFLIRVYHPLLLKVLHWPKTTLLVAALSVLTVLWPLNKVGGEFLPQINEGDLLYMPSTLPGISAAEAASMLQKTDKLIMSVPEVARVFGKTGKAETATDSAPLEMVETTIQLKPQEQWRPGMTMDKIIEELDNTVRLPGLANLWVPPIRNRIDMLSTGIKSPIGIKVSGTVLADIDAMAEQIEEVARTVPGVASALAERLEGGRYINVEINREKAARYGMTVADVQLFVTSAVGGAMVGETVEGIARYPINLRYPQSWRDSPQALRQLPILTPMKQQITLADVADIKVSTGPSMLKTENARPTSWIYIDARDRDMVSVVHDLQKAIAEKVQLKPGTSVAFSGQFELLERANHKLKLMVPMTLMIIFVLLYLAFRRVGEALLIISSVPFALVGGIWLLWWMGFHLSVATGTGFIALAGVAAEFGVVMLMYLRHAIEAVPSLNNPQTFSEQKLDEALYHGAVLRVRPKAMTVAVIIAGLLPILWGTGAGSEVMSRIAAPMIGGMITAPLLSLFIIPAAYKLMWLHRHRVRK</sequence>
<protein>
    <recommendedName>
        <fullName>Cation efflux system protein CusA</fullName>
    </recommendedName>
</protein>
<keyword id="KW-0002">3D-structure</keyword>
<keyword id="KW-0997">Cell inner membrane</keyword>
<keyword id="KW-1003">Cell membrane</keyword>
<keyword id="KW-0186">Copper</keyword>
<keyword id="KW-0187">Copper transport</keyword>
<keyword id="KW-0406">Ion transport</keyword>
<keyword id="KW-0472">Membrane</keyword>
<keyword id="KW-1185">Reference proteome</keyword>
<keyword id="KW-0812">Transmembrane</keyword>
<keyword id="KW-1133">Transmembrane helix</keyword>
<keyword id="KW-0813">Transport</keyword>